<feature type="chain" id="PRO_0000408309" description="3,7-dimethylxanthine N-methyltransferase 2">
    <location>
        <begin position="1"/>
        <end position="384"/>
    </location>
</feature>
<feature type="binding site" evidence="2">
    <location>
        <position position="18"/>
    </location>
    <ligand>
        <name>S-adenosyl-L-homocysteine</name>
        <dbReference type="ChEBI" id="CHEBI:57856"/>
    </ligand>
</feature>
<feature type="binding site" evidence="2">
    <location>
        <position position="61"/>
    </location>
    <ligand>
        <name>S-adenosyl-L-homocysteine</name>
        <dbReference type="ChEBI" id="CHEBI:57856"/>
    </ligand>
</feature>
<feature type="binding site" evidence="2">
    <location>
        <position position="66"/>
    </location>
    <ligand>
        <name>S-adenosyl-L-homocysteine</name>
        <dbReference type="ChEBI" id="CHEBI:57856"/>
    </ligand>
</feature>
<feature type="binding site" evidence="2">
    <location>
        <position position="100"/>
    </location>
    <ligand>
        <name>S-adenosyl-L-homocysteine</name>
        <dbReference type="ChEBI" id="CHEBI:57856"/>
    </ligand>
</feature>
<feature type="binding site" evidence="2">
    <location>
        <position position="101"/>
    </location>
    <ligand>
        <name>S-adenosyl-L-homocysteine</name>
        <dbReference type="ChEBI" id="CHEBI:57856"/>
    </ligand>
</feature>
<feature type="binding site" evidence="2">
    <location>
        <position position="139"/>
    </location>
    <ligand>
        <name>S-adenosyl-L-homocysteine</name>
        <dbReference type="ChEBI" id="CHEBI:57856"/>
    </ligand>
</feature>
<feature type="binding site" evidence="2">
    <location>
        <position position="140"/>
    </location>
    <ligand>
        <name>S-adenosyl-L-homocysteine</name>
        <dbReference type="ChEBI" id="CHEBI:57856"/>
    </ligand>
</feature>
<feature type="binding site" evidence="1">
    <location>
        <position position="156"/>
    </location>
    <ligand>
        <name>S-adenosyl-L-homocysteine</name>
        <dbReference type="ChEBI" id="CHEBI:57856"/>
    </ligand>
</feature>
<feature type="binding site" evidence="2">
    <location>
        <position position="157"/>
    </location>
    <ligand>
        <name>theobromine</name>
        <dbReference type="ChEBI" id="CHEBI:28946"/>
    </ligand>
</feature>
<feature type="binding site" evidence="2">
    <location>
        <position position="158"/>
    </location>
    <ligand>
        <name>S-adenosyl-L-homocysteine</name>
        <dbReference type="ChEBI" id="CHEBI:57856"/>
    </ligand>
</feature>
<feature type="binding site" evidence="2">
    <location>
        <position position="160"/>
    </location>
    <ligand>
        <name>theobromine</name>
        <dbReference type="ChEBI" id="CHEBI:28946"/>
    </ligand>
</feature>
<feature type="binding site" evidence="2">
    <location>
        <position position="161"/>
    </location>
    <ligand>
        <name>theobromine</name>
        <dbReference type="ChEBI" id="CHEBI:28946"/>
    </ligand>
</feature>
<feature type="binding site" evidence="3">
    <location>
        <position position="178"/>
    </location>
    <ligand>
        <name>Mg(2+)</name>
        <dbReference type="ChEBI" id="CHEBI:18420"/>
    </ligand>
</feature>
<feature type="binding site" evidence="2">
    <location>
        <position position="237"/>
    </location>
    <ligand>
        <name>theobromine</name>
        <dbReference type="ChEBI" id="CHEBI:28946"/>
    </ligand>
</feature>
<feature type="binding site" evidence="3">
    <location>
        <position position="260"/>
    </location>
    <ligand>
        <name>Mg(2+)</name>
        <dbReference type="ChEBI" id="CHEBI:18420"/>
    </ligand>
</feature>
<feature type="binding site" evidence="3">
    <location>
        <position position="262"/>
    </location>
    <ligand>
        <name>Mg(2+)</name>
        <dbReference type="ChEBI" id="CHEBI:18420"/>
    </ligand>
</feature>
<feature type="binding site" evidence="3">
    <location>
        <position position="263"/>
    </location>
    <ligand>
        <name>Mg(2+)</name>
        <dbReference type="ChEBI" id="CHEBI:18420"/>
    </ligand>
</feature>
<feature type="binding site" evidence="2">
    <location>
        <position position="368"/>
    </location>
    <ligand>
        <name>theobromine</name>
        <dbReference type="ChEBI" id="CHEBI:28946"/>
    </ligand>
</feature>
<feature type="site" description="Involved in substrate discrimination" evidence="4">
    <location>
        <position position="154"/>
    </location>
</feature>
<feature type="site" description="Involved in substrate discrimination" evidence="4">
    <location>
        <position position="266"/>
    </location>
</feature>
<feature type="site" description="Involved in substrate discrimination" evidence="4">
    <location>
        <position position="328"/>
    </location>
</feature>
<feature type="site" description="Involved in substrate discrimination" evidence="4">
    <location>
        <position position="343"/>
    </location>
</feature>
<feature type="sequence conflict" description="In Ref. 2; AEV57593/AIG53793/AIG53794." evidence="10" ref="2">
    <original>A</original>
    <variation>V</variation>
    <location>
        <position position="177"/>
    </location>
</feature>
<feature type="sequence conflict" description="In Ref. 2; AEV57593/AIG53793/AIG53794." evidence="10" ref="2">
    <original>GPPIK</original>
    <variation>RPPIQ</variation>
    <location>
        <begin position="189"/>
        <end position="193"/>
    </location>
</feature>
<feature type="sequence conflict" description="In Ref. 2; AEV57593/AIG53793/AIG53794." evidence="10" ref="2">
    <original>I</original>
    <variation>V</variation>
    <location>
        <position position="250"/>
    </location>
</feature>
<keyword id="KW-0017">Alkaloid metabolism</keyword>
<keyword id="KW-0460">Magnesium</keyword>
<keyword id="KW-0479">Metal-binding</keyword>
<keyword id="KW-0489">Methyltransferase</keyword>
<keyword id="KW-1185">Reference proteome</keyword>
<keyword id="KW-0949">S-adenosyl-L-methionine</keyword>
<keyword id="KW-0808">Transferase</keyword>
<comment type="function">
    <text evidence="5 8">Involved in the biosynthesis of caffeine. Catalyzes the conversion of 7-methylxanthine (7mX) to theobromine and of theobromine to caffeine. Has 1-N-methylation activity.</text>
</comment>
<comment type="catalytic activity">
    <reaction evidence="5">
        <text>7-methylxanthine + S-adenosyl-L-methionine = theobromine + S-adenosyl-L-homocysteine + H(+)</text>
        <dbReference type="Rhea" id="RHEA:24604"/>
        <dbReference type="ChEBI" id="CHEBI:15378"/>
        <dbReference type="ChEBI" id="CHEBI:28946"/>
        <dbReference type="ChEBI" id="CHEBI:48991"/>
        <dbReference type="ChEBI" id="CHEBI:57856"/>
        <dbReference type="ChEBI" id="CHEBI:59789"/>
        <dbReference type="EC" id="2.1.1.160"/>
    </reaction>
    <physiologicalReaction direction="left-to-right" evidence="5">
        <dbReference type="Rhea" id="RHEA:24605"/>
    </physiologicalReaction>
</comment>
<comment type="catalytic activity">
    <reaction evidence="5">
        <text>theobromine + S-adenosyl-L-methionine = caffeine + S-adenosyl-L-homocysteine + H(+)</text>
        <dbReference type="Rhea" id="RHEA:20944"/>
        <dbReference type="ChEBI" id="CHEBI:15378"/>
        <dbReference type="ChEBI" id="CHEBI:27732"/>
        <dbReference type="ChEBI" id="CHEBI:28946"/>
        <dbReference type="ChEBI" id="CHEBI:57856"/>
        <dbReference type="ChEBI" id="CHEBI:59789"/>
        <dbReference type="EC" id="2.1.1.160"/>
    </reaction>
    <physiologicalReaction direction="left-to-right" evidence="5">
        <dbReference type="Rhea" id="RHEA:20945"/>
    </physiologicalReaction>
</comment>
<comment type="catalytic activity">
    <reaction evidence="5">
        <text>1,7-dimethylxanthine + S-adenosyl-L-methionine = caffeine + S-adenosyl-L-homocysteine + H(+)</text>
        <dbReference type="Rhea" id="RHEA:10280"/>
        <dbReference type="ChEBI" id="CHEBI:15378"/>
        <dbReference type="ChEBI" id="CHEBI:25858"/>
        <dbReference type="ChEBI" id="CHEBI:27732"/>
        <dbReference type="ChEBI" id="CHEBI:57856"/>
        <dbReference type="ChEBI" id="CHEBI:59789"/>
        <dbReference type="EC" id="2.1.1.160"/>
    </reaction>
    <physiologicalReaction direction="left-to-right" evidence="5">
        <dbReference type="Rhea" id="RHEA:10281"/>
    </physiologicalReaction>
</comment>
<comment type="cofactor">
    <cofactor evidence="3">
        <name>Mg(2+)</name>
        <dbReference type="ChEBI" id="CHEBI:18420"/>
    </cofactor>
    <text evidence="3">Binds 1 Mg(2+) ion per subunit.</text>
</comment>
<comment type="biophysicochemical properties">
    <kinetics>
        <KM evidence="5">125.6 uM for 7-methylxanthine for the recombinant protein</KM>
        <KM evidence="5">30.8 uM for paraxanthine for the recombinant protein</KM>
        <KM evidence="5">157 uM for theobromine for the recombinant protein</KM>
    </kinetics>
</comment>
<comment type="pathway">
    <text evidence="5">Alkaloid biosynthesis.</text>
</comment>
<comment type="tissue specificity">
    <text evidence="5 6">Highly expressed in developing endosperm (PubMed:12527364). Detected in young leaves and flower buds (PubMed:12527364, PubMed:25249475). Present in immature fruits (grains), but barely in mature fruits (PubMed:25249475).</text>
</comment>
<comment type="similarity">
    <text evidence="10">Belongs to the methyltransferase superfamily. Type-7 methyltransferase family.</text>
</comment>
<proteinExistence type="evidence at protein level"/>
<evidence type="ECO:0000250" key="1">
    <source>
        <dbReference type="UniProtKB" id="A4GE69"/>
    </source>
</evidence>
<evidence type="ECO:0000250" key="2">
    <source>
        <dbReference type="UniProtKB" id="A4GE70"/>
    </source>
</evidence>
<evidence type="ECO:0000250" key="3">
    <source>
        <dbReference type="UniProtKB" id="Q9FLN8"/>
    </source>
</evidence>
<evidence type="ECO:0000250" key="4">
    <source>
        <dbReference type="UniProtKB" id="Q9FZN8"/>
    </source>
</evidence>
<evidence type="ECO:0000269" key="5">
    <source>
    </source>
</evidence>
<evidence type="ECO:0000269" key="6">
    <source>
    </source>
</evidence>
<evidence type="ECO:0000303" key="7">
    <source>
    </source>
</evidence>
<evidence type="ECO:0000303" key="8">
    <source>
    </source>
</evidence>
<evidence type="ECO:0000303" key="9">
    <source>
    </source>
</evidence>
<evidence type="ECO:0000305" key="10"/>
<organism>
    <name type="scientific">Coffea arabica</name>
    <name type="common">Arabian coffee</name>
    <dbReference type="NCBI Taxonomy" id="13443"/>
    <lineage>
        <taxon>Eukaryota</taxon>
        <taxon>Viridiplantae</taxon>
        <taxon>Streptophyta</taxon>
        <taxon>Embryophyta</taxon>
        <taxon>Tracheophyta</taxon>
        <taxon>Spermatophyta</taxon>
        <taxon>Magnoliopsida</taxon>
        <taxon>eudicotyledons</taxon>
        <taxon>Gunneridae</taxon>
        <taxon>Pentapetalae</taxon>
        <taxon>asterids</taxon>
        <taxon>lamiids</taxon>
        <taxon>Gentianales</taxon>
        <taxon>Rubiaceae</taxon>
        <taxon>Ixoroideae</taxon>
        <taxon>Gardenieae complex</taxon>
        <taxon>Bertiereae - Coffeeae clade</taxon>
        <taxon>Coffeeae</taxon>
        <taxon>Coffea</taxon>
    </lineage>
</organism>
<protein>
    <recommendedName>
        <fullName evidence="9">3,7-dimethylxanthine N-methyltransferase 2</fullName>
        <shortName evidence="9">CaDXMT2</shortName>
        <ecNumber evidence="5">2.1.1.160</ecNumber>
    </recommendedName>
    <alternativeName>
        <fullName evidence="9">Caffeine synthase 1</fullName>
    </alternativeName>
    <alternativeName>
        <fullName evidence="7">Caffeine synthase 6</fullName>
        <shortName evidence="7">CtCS6</shortName>
    </alternativeName>
</protein>
<reference key="1">
    <citation type="journal article" date="2003" name="FEBS Lett.">
        <title>Isolation of a new dual-functional caffeine synthase gene encoding an enzyme for the conversion of 7-methylxanthine to caffeine from coffee (Coffea arabica L.).</title>
        <authorList>
            <person name="Mizuno K."/>
            <person name="Okuda A."/>
            <person name="Kato M."/>
            <person name="Yoneyama N."/>
            <person name="Tanaka H."/>
            <person name="Ashihara H."/>
            <person name="Fujimura T."/>
        </authorList>
    </citation>
    <scope>NUCLEOTIDE SEQUENCE [MRNA]</scope>
    <scope>FUNCTION</scope>
    <scope>CATALYTIC ACTIVITY</scope>
    <scope>TISSUE SPECIFICITY</scope>
    <scope>BIOPHYSICOCHEMICAL PROPERTIES</scope>
    <scope>PATHWAY</scope>
</reference>
<reference key="2">
    <citation type="journal article" date="2015" name="Planta">
        <title>Differential regulation of caffeine metabolism in Coffea arabica (Arabica) and Coffea canephora (Robusta).</title>
        <authorList>
            <person name="Perrois C."/>
            <person name="Strickler S.R."/>
            <person name="Mathieu G."/>
            <person name="Lepelley M."/>
            <person name="Bedon L."/>
            <person name="Michaux S."/>
            <person name="Husson J."/>
            <person name="Mueller L."/>
            <person name="Privat I."/>
        </authorList>
    </citation>
    <scope>NUCLEOTIDE SEQUENCE [GENOMIC DNA / MRNA]</scope>
    <scope>TISSUE SPECIFICITY</scope>
    <scope>GENE FAMILY</scope>
    <scope>NOMENCLATURE</scope>
    <source>
        <strain>cv. Caturra</strain>
        <strain>cv. ET39</strain>
    </source>
</reference>
<reference key="3">
    <citation type="journal article" date="2008" name="Phytochemistry">
        <title>Caffeine and related purine alkaloids: biosynthesis, catabolism, function and genetic engineering.</title>
        <authorList>
            <person name="Ashihara H."/>
            <person name="Sano H."/>
            <person name="Crozier A."/>
        </authorList>
    </citation>
    <scope>FUNCTION</scope>
    <scope>REVIEW ON CAFFEINE BIOSYNTHESIS</scope>
</reference>
<accession>Q8H0D3</accession>
<accession>G9BZJ8</accession>
<sequence length="384" mass="43276">MELQEVLHMNGGEGDTSYAKNSSYNLFLIRVKPVLEQCIQELLRANLPNINKCFKVGDLGCASGPNTFSTVRDIVQSIDKVGQEKKNELERPTIQIFLNDLFQNDFNSVFKLLPSFYRNLEKENGRKIGSCLIGAMPGSFYSRLFPEESMHFLHSCYCLHWLSQVPSGLVTELGISANKGCIYSSKASGPPIKKAYLDQFTKDFTTFLRIHSEELISRGRMLLTFICKEDEFDHPNSMDLLEMSINDLVIEGHLEEEKLDSFNVPIYAPSTEEVKRIVEEEGSFEILYLETFYAPYDAGFSIDDDYQGRSHSPVSCDEHARAAHVASVVRSIYEPILASHFGEAILPDLSHRIAKNAAKVLRSGKGFYDSVIISLAKKPEKADM</sequence>
<name>DXMT2_COFAR</name>
<gene>
    <name evidence="9" type="primary">DXMT2</name>
    <name evidence="9" type="synonym">CCS1</name>
    <name evidence="7" type="synonym">CS6</name>
</gene>
<dbReference type="EC" id="2.1.1.160" evidence="5"/>
<dbReference type="EMBL" id="AB086414">
    <property type="protein sequence ID" value="BAC43760.1"/>
    <property type="molecule type" value="mRNA"/>
</dbReference>
<dbReference type="EMBL" id="HQ724310">
    <property type="protein sequence ID" value="AEV57593.1"/>
    <property type="molecule type" value="Genomic_DNA"/>
</dbReference>
<dbReference type="EMBL" id="KJ577792">
    <property type="protein sequence ID" value="AIG53793.1"/>
    <property type="molecule type" value="Genomic_DNA"/>
</dbReference>
<dbReference type="EMBL" id="KJ577793">
    <property type="protein sequence ID" value="AIG53794.1"/>
    <property type="molecule type" value="mRNA"/>
</dbReference>
<dbReference type="SMR" id="Q8H0D3"/>
<dbReference type="KEGG" id="ag:BAC43760"/>
<dbReference type="BRENDA" id="2.1.1.159">
    <property type="organism ID" value="1559"/>
</dbReference>
<dbReference type="BRENDA" id="2.1.1.160">
    <property type="organism ID" value="1559"/>
</dbReference>
<dbReference type="SABIO-RK" id="Q8H0D3"/>
<dbReference type="Proteomes" id="UP000515148">
    <property type="component" value="Unplaced"/>
</dbReference>
<dbReference type="GO" id="GO:0102741">
    <property type="term" value="F:caffeine synthase activity"/>
    <property type="evidence" value="ECO:0007669"/>
    <property type="project" value="UniProtKB-EC"/>
</dbReference>
<dbReference type="GO" id="GO:0046872">
    <property type="term" value="F:metal ion binding"/>
    <property type="evidence" value="ECO:0007669"/>
    <property type="project" value="UniProtKB-KW"/>
</dbReference>
<dbReference type="GO" id="GO:0009820">
    <property type="term" value="P:alkaloid metabolic process"/>
    <property type="evidence" value="ECO:0007669"/>
    <property type="project" value="UniProtKB-KW"/>
</dbReference>
<dbReference type="GO" id="GO:0032259">
    <property type="term" value="P:methylation"/>
    <property type="evidence" value="ECO:0007669"/>
    <property type="project" value="UniProtKB-KW"/>
</dbReference>
<dbReference type="Gene3D" id="1.10.1200.270">
    <property type="entry name" value="Methyltransferase, alpha-helical capping domain"/>
    <property type="match status" value="1"/>
</dbReference>
<dbReference type="Gene3D" id="3.40.50.150">
    <property type="entry name" value="Vaccinia Virus protein VP39"/>
    <property type="match status" value="1"/>
</dbReference>
<dbReference type="InterPro" id="IPR005299">
    <property type="entry name" value="MeTrfase_7"/>
</dbReference>
<dbReference type="InterPro" id="IPR042086">
    <property type="entry name" value="MeTrfase_capping"/>
</dbReference>
<dbReference type="InterPro" id="IPR029063">
    <property type="entry name" value="SAM-dependent_MTases_sf"/>
</dbReference>
<dbReference type="PANTHER" id="PTHR31009">
    <property type="entry name" value="S-ADENOSYL-L-METHIONINE:CARBOXYL METHYLTRANSFERASE FAMILY PROTEIN"/>
    <property type="match status" value="1"/>
</dbReference>
<dbReference type="Pfam" id="PF03492">
    <property type="entry name" value="Methyltransf_7"/>
    <property type="match status" value="1"/>
</dbReference>
<dbReference type="SUPFAM" id="SSF53335">
    <property type="entry name" value="S-adenosyl-L-methionine-dependent methyltransferases"/>
    <property type="match status" value="1"/>
</dbReference>